<evidence type="ECO:0000255" key="1">
    <source>
        <dbReference type="HAMAP-Rule" id="MF_00133"/>
    </source>
</evidence>
<feature type="chain" id="PRO_1000018382" description="Tryptophan synthase beta chain">
    <location>
        <begin position="1"/>
        <end position="410"/>
    </location>
</feature>
<feature type="modified residue" description="N6-(pyridoxal phosphate)lysine" evidence="1">
    <location>
        <position position="98"/>
    </location>
</feature>
<accession>Q161H9</accession>
<reference key="1">
    <citation type="journal article" date="2007" name="J. Bacteriol.">
        <title>The complete genome sequence of Roseobacter denitrificans reveals a mixotrophic rather than photosynthetic metabolism.</title>
        <authorList>
            <person name="Swingley W.D."/>
            <person name="Sadekar S."/>
            <person name="Mastrian S.D."/>
            <person name="Matthies H.J."/>
            <person name="Hao J."/>
            <person name="Ramos H."/>
            <person name="Acharya C.R."/>
            <person name="Conrad A.L."/>
            <person name="Taylor H.L."/>
            <person name="Dejesa L.C."/>
            <person name="Shah M.K."/>
            <person name="O'Huallachain M.E."/>
            <person name="Lince M.T."/>
            <person name="Blankenship R.E."/>
            <person name="Beatty J.T."/>
            <person name="Touchman J.W."/>
        </authorList>
    </citation>
    <scope>NUCLEOTIDE SEQUENCE [LARGE SCALE GENOMIC DNA]</scope>
    <source>
        <strain>ATCC 33942 / OCh 114</strain>
    </source>
</reference>
<sequence>MANDLFNSFMTGPDENGRFGDFGGRFVSETLMPLILELEEQYENAKTDESFWAEMNDLWTHYVGRPSPLYFAERLTDHLGGAKVYMKRDELNHTGAHKINNVLGQIILARRMGKTRIIAETGAGQHGVATATVCAKFGLKCVVYMGAHDVERQAPNVFRMRLLGAEVVPVTSGRGTLKDAMNDALRDWVTNVRDTFYCIGTVAGPHPYPAMVRDFQAIIGKEVRTQMTAAEGRFPDTVIAAIGGGSNAMGLFYPFLDDKEVGIIGVEAGGKGVNAKMEHCASLTGGRPGVLHGNRTYLLQDDDGQILEGFSISAGLDYPGIGPEHAWLHDIGRAQYVSITDVEALEAFQLCCELEGIIPALEPSHALAHVMKIAPDLPSDHIICMNMCGRGDKDIFTVAKALGFEMGEFA</sequence>
<comment type="function">
    <text evidence="1">The beta subunit is responsible for the synthesis of L-tryptophan from indole and L-serine.</text>
</comment>
<comment type="catalytic activity">
    <reaction evidence="1">
        <text>(1S,2R)-1-C-(indol-3-yl)glycerol 3-phosphate + L-serine = D-glyceraldehyde 3-phosphate + L-tryptophan + H2O</text>
        <dbReference type="Rhea" id="RHEA:10532"/>
        <dbReference type="ChEBI" id="CHEBI:15377"/>
        <dbReference type="ChEBI" id="CHEBI:33384"/>
        <dbReference type="ChEBI" id="CHEBI:57912"/>
        <dbReference type="ChEBI" id="CHEBI:58866"/>
        <dbReference type="ChEBI" id="CHEBI:59776"/>
        <dbReference type="EC" id="4.2.1.20"/>
    </reaction>
</comment>
<comment type="cofactor">
    <cofactor evidence="1">
        <name>pyridoxal 5'-phosphate</name>
        <dbReference type="ChEBI" id="CHEBI:597326"/>
    </cofactor>
</comment>
<comment type="pathway">
    <text evidence="1">Amino-acid biosynthesis; L-tryptophan biosynthesis; L-tryptophan from chorismate: step 5/5.</text>
</comment>
<comment type="subunit">
    <text evidence="1">Tetramer of two alpha and two beta chains.</text>
</comment>
<comment type="similarity">
    <text evidence="1">Belongs to the TrpB family.</text>
</comment>
<gene>
    <name evidence="1" type="primary">trpB</name>
    <name type="ordered locus">RD1_3906</name>
</gene>
<dbReference type="EC" id="4.2.1.20" evidence="1"/>
<dbReference type="EMBL" id="CP000362">
    <property type="protein sequence ID" value="ABG33364.1"/>
    <property type="molecule type" value="Genomic_DNA"/>
</dbReference>
<dbReference type="RefSeq" id="WP_011569975.1">
    <property type="nucleotide sequence ID" value="NC_008209.1"/>
</dbReference>
<dbReference type="SMR" id="Q161H9"/>
<dbReference type="STRING" id="375451.RD1_3906"/>
<dbReference type="KEGG" id="rde:RD1_3906"/>
<dbReference type="eggNOG" id="COG0133">
    <property type="taxonomic scope" value="Bacteria"/>
</dbReference>
<dbReference type="HOGENOM" id="CLU_016734_3_1_5"/>
<dbReference type="OrthoDB" id="9766131at2"/>
<dbReference type="UniPathway" id="UPA00035">
    <property type="reaction ID" value="UER00044"/>
</dbReference>
<dbReference type="Proteomes" id="UP000007029">
    <property type="component" value="Chromosome"/>
</dbReference>
<dbReference type="GO" id="GO:0005737">
    <property type="term" value="C:cytoplasm"/>
    <property type="evidence" value="ECO:0007669"/>
    <property type="project" value="TreeGrafter"/>
</dbReference>
<dbReference type="GO" id="GO:0004834">
    <property type="term" value="F:tryptophan synthase activity"/>
    <property type="evidence" value="ECO:0007669"/>
    <property type="project" value="UniProtKB-UniRule"/>
</dbReference>
<dbReference type="CDD" id="cd06446">
    <property type="entry name" value="Trp-synth_B"/>
    <property type="match status" value="1"/>
</dbReference>
<dbReference type="FunFam" id="3.40.50.1100:FF:000001">
    <property type="entry name" value="Tryptophan synthase beta chain"/>
    <property type="match status" value="1"/>
</dbReference>
<dbReference type="FunFam" id="3.40.50.1100:FF:000004">
    <property type="entry name" value="Tryptophan synthase beta chain"/>
    <property type="match status" value="1"/>
</dbReference>
<dbReference type="Gene3D" id="3.40.50.1100">
    <property type="match status" value="2"/>
</dbReference>
<dbReference type="HAMAP" id="MF_00133">
    <property type="entry name" value="Trp_synth_beta"/>
    <property type="match status" value="1"/>
</dbReference>
<dbReference type="InterPro" id="IPR006653">
    <property type="entry name" value="Trp_synth_b_CS"/>
</dbReference>
<dbReference type="InterPro" id="IPR006654">
    <property type="entry name" value="Trp_synth_beta"/>
</dbReference>
<dbReference type="InterPro" id="IPR023026">
    <property type="entry name" value="Trp_synth_beta/beta-like"/>
</dbReference>
<dbReference type="InterPro" id="IPR001926">
    <property type="entry name" value="TrpB-like_PALP"/>
</dbReference>
<dbReference type="InterPro" id="IPR036052">
    <property type="entry name" value="TrpB-like_PALP_sf"/>
</dbReference>
<dbReference type="NCBIfam" id="TIGR00263">
    <property type="entry name" value="trpB"/>
    <property type="match status" value="1"/>
</dbReference>
<dbReference type="PANTHER" id="PTHR48077:SF3">
    <property type="entry name" value="TRYPTOPHAN SYNTHASE"/>
    <property type="match status" value="1"/>
</dbReference>
<dbReference type="PANTHER" id="PTHR48077">
    <property type="entry name" value="TRYPTOPHAN SYNTHASE-RELATED"/>
    <property type="match status" value="1"/>
</dbReference>
<dbReference type="Pfam" id="PF00291">
    <property type="entry name" value="PALP"/>
    <property type="match status" value="1"/>
</dbReference>
<dbReference type="PIRSF" id="PIRSF001413">
    <property type="entry name" value="Trp_syn_beta"/>
    <property type="match status" value="1"/>
</dbReference>
<dbReference type="SUPFAM" id="SSF53686">
    <property type="entry name" value="Tryptophan synthase beta subunit-like PLP-dependent enzymes"/>
    <property type="match status" value="1"/>
</dbReference>
<dbReference type="PROSITE" id="PS00168">
    <property type="entry name" value="TRP_SYNTHASE_BETA"/>
    <property type="match status" value="1"/>
</dbReference>
<protein>
    <recommendedName>
        <fullName evidence="1">Tryptophan synthase beta chain</fullName>
        <ecNumber evidence="1">4.2.1.20</ecNumber>
    </recommendedName>
</protein>
<organism>
    <name type="scientific">Roseobacter denitrificans (strain ATCC 33942 / OCh 114)</name>
    <name type="common">Erythrobacter sp. (strain OCh 114)</name>
    <name type="synonym">Roseobacter denitrificans</name>
    <dbReference type="NCBI Taxonomy" id="375451"/>
    <lineage>
        <taxon>Bacteria</taxon>
        <taxon>Pseudomonadati</taxon>
        <taxon>Pseudomonadota</taxon>
        <taxon>Alphaproteobacteria</taxon>
        <taxon>Rhodobacterales</taxon>
        <taxon>Roseobacteraceae</taxon>
        <taxon>Roseobacter</taxon>
    </lineage>
</organism>
<proteinExistence type="inferred from homology"/>
<keyword id="KW-0028">Amino-acid biosynthesis</keyword>
<keyword id="KW-0057">Aromatic amino acid biosynthesis</keyword>
<keyword id="KW-0456">Lyase</keyword>
<keyword id="KW-0663">Pyridoxal phosphate</keyword>
<keyword id="KW-1185">Reference proteome</keyword>
<keyword id="KW-0822">Tryptophan biosynthesis</keyword>
<name>TRPB_ROSDO</name>